<reference key="1">
    <citation type="journal article" date="2006" name="Genome Res.">
        <title>Massive genome erosion and functional adaptations provide insights into the symbiotic lifestyle of Sodalis glossinidius in the tsetse host.</title>
        <authorList>
            <person name="Toh H."/>
            <person name="Weiss B.L."/>
            <person name="Perkin S.A.H."/>
            <person name="Yamashita A."/>
            <person name="Oshima K."/>
            <person name="Hattori M."/>
            <person name="Aksoy S."/>
        </authorList>
    </citation>
    <scope>NUCLEOTIDE SEQUENCE [LARGE SCALE GENOMIC DNA]</scope>
    <source>
        <strain>morsitans</strain>
    </source>
</reference>
<organism>
    <name type="scientific">Sodalis glossinidius (strain morsitans)</name>
    <dbReference type="NCBI Taxonomy" id="343509"/>
    <lineage>
        <taxon>Bacteria</taxon>
        <taxon>Pseudomonadati</taxon>
        <taxon>Pseudomonadota</taxon>
        <taxon>Gammaproteobacteria</taxon>
        <taxon>Enterobacterales</taxon>
        <taxon>Bruguierivoracaceae</taxon>
        <taxon>Sodalis</taxon>
    </lineage>
</organism>
<dbReference type="EMBL" id="AP008232">
    <property type="protein sequence ID" value="BAE73715.1"/>
    <property type="molecule type" value="Genomic_DNA"/>
</dbReference>
<dbReference type="RefSeq" id="WP_011410413.1">
    <property type="nucleotide sequence ID" value="NZ_LN854557.1"/>
</dbReference>
<dbReference type="SMR" id="Q2NVW0"/>
<dbReference type="STRING" id="343509.SG0440"/>
<dbReference type="KEGG" id="sgl:SG0440"/>
<dbReference type="eggNOG" id="COG2001">
    <property type="taxonomic scope" value="Bacteria"/>
</dbReference>
<dbReference type="HOGENOM" id="CLU_107907_2_0_6"/>
<dbReference type="OrthoDB" id="9807753at2"/>
<dbReference type="BioCyc" id="SGLO343509:SGP1_RS03970-MONOMER"/>
<dbReference type="Proteomes" id="UP000001932">
    <property type="component" value="Chromosome"/>
</dbReference>
<dbReference type="GO" id="GO:0005737">
    <property type="term" value="C:cytoplasm"/>
    <property type="evidence" value="ECO:0007669"/>
    <property type="project" value="UniProtKB-UniRule"/>
</dbReference>
<dbReference type="GO" id="GO:0009295">
    <property type="term" value="C:nucleoid"/>
    <property type="evidence" value="ECO:0007669"/>
    <property type="project" value="UniProtKB-SubCell"/>
</dbReference>
<dbReference type="GO" id="GO:0003700">
    <property type="term" value="F:DNA-binding transcription factor activity"/>
    <property type="evidence" value="ECO:0007669"/>
    <property type="project" value="UniProtKB-UniRule"/>
</dbReference>
<dbReference type="GO" id="GO:0000976">
    <property type="term" value="F:transcription cis-regulatory region binding"/>
    <property type="evidence" value="ECO:0007669"/>
    <property type="project" value="TreeGrafter"/>
</dbReference>
<dbReference type="GO" id="GO:2000143">
    <property type="term" value="P:negative regulation of DNA-templated transcription initiation"/>
    <property type="evidence" value="ECO:0007669"/>
    <property type="project" value="TreeGrafter"/>
</dbReference>
<dbReference type="CDD" id="cd16321">
    <property type="entry name" value="MraZ_C"/>
    <property type="match status" value="1"/>
</dbReference>
<dbReference type="CDD" id="cd16320">
    <property type="entry name" value="MraZ_N"/>
    <property type="match status" value="1"/>
</dbReference>
<dbReference type="FunFam" id="3.40.1550.20:FF:000001">
    <property type="entry name" value="Transcriptional regulator MraZ"/>
    <property type="match status" value="1"/>
</dbReference>
<dbReference type="Gene3D" id="3.40.1550.20">
    <property type="entry name" value="Transcriptional regulator MraZ domain"/>
    <property type="match status" value="1"/>
</dbReference>
<dbReference type="HAMAP" id="MF_01008">
    <property type="entry name" value="MraZ"/>
    <property type="match status" value="1"/>
</dbReference>
<dbReference type="InterPro" id="IPR003444">
    <property type="entry name" value="MraZ"/>
</dbReference>
<dbReference type="InterPro" id="IPR035644">
    <property type="entry name" value="MraZ_C"/>
</dbReference>
<dbReference type="InterPro" id="IPR020603">
    <property type="entry name" value="MraZ_dom"/>
</dbReference>
<dbReference type="InterPro" id="IPR035642">
    <property type="entry name" value="MraZ_N"/>
</dbReference>
<dbReference type="InterPro" id="IPR038619">
    <property type="entry name" value="MraZ_sf"/>
</dbReference>
<dbReference type="InterPro" id="IPR007159">
    <property type="entry name" value="SpoVT-AbrB_dom"/>
</dbReference>
<dbReference type="InterPro" id="IPR037914">
    <property type="entry name" value="SpoVT-AbrB_sf"/>
</dbReference>
<dbReference type="NCBIfam" id="TIGR00242">
    <property type="entry name" value="division/cell wall cluster transcriptional repressor MraZ"/>
    <property type="match status" value="1"/>
</dbReference>
<dbReference type="PANTHER" id="PTHR34701">
    <property type="entry name" value="TRANSCRIPTIONAL REGULATOR MRAZ"/>
    <property type="match status" value="1"/>
</dbReference>
<dbReference type="PANTHER" id="PTHR34701:SF1">
    <property type="entry name" value="TRANSCRIPTIONAL REGULATOR MRAZ"/>
    <property type="match status" value="1"/>
</dbReference>
<dbReference type="Pfam" id="PF02381">
    <property type="entry name" value="MraZ"/>
    <property type="match status" value="2"/>
</dbReference>
<dbReference type="SUPFAM" id="SSF89447">
    <property type="entry name" value="AbrB/MazE/MraZ-like"/>
    <property type="match status" value="1"/>
</dbReference>
<dbReference type="PROSITE" id="PS51740">
    <property type="entry name" value="SPOVT_ABRB"/>
    <property type="match status" value="2"/>
</dbReference>
<name>MRAZ_SODGM</name>
<gene>
    <name evidence="1" type="primary">mraZ</name>
    <name type="ordered locus">SG0440</name>
</gene>
<sequence>MFRGATLVNLDSKGRLAVPTRHREKLNEESAGLMVCTIDLHQPCLLLYPLPAWEIIEQKLSRLSSMNPAERRVQRLLLGHASECQMDGAGRILLAPTLRQHAGLSKEVMLVGQFNKFELWDEQTWYQQVKDDIDAELSAELPLTDRLQDLSL</sequence>
<accession>Q2NVW0</accession>
<evidence type="ECO:0000255" key="1">
    <source>
        <dbReference type="HAMAP-Rule" id="MF_01008"/>
    </source>
</evidence>
<evidence type="ECO:0000255" key="2">
    <source>
        <dbReference type="PROSITE-ProRule" id="PRU01076"/>
    </source>
</evidence>
<comment type="function">
    <text evidence="1">Negatively regulates its own expression and that of the subsequent genes in the proximal part of the division and cell wall (dcw) gene cluster. Acts by binding directly to DNA. May also regulate the expression of genes outside the dcw cluster.</text>
</comment>
<comment type="subunit">
    <text evidence="1">Forms oligomers.</text>
</comment>
<comment type="subcellular location">
    <subcellularLocation>
        <location evidence="1">Cytoplasm</location>
        <location evidence="1">Nucleoid</location>
    </subcellularLocation>
</comment>
<comment type="similarity">
    <text evidence="1">Belongs to the MraZ family.</text>
</comment>
<protein>
    <recommendedName>
        <fullName>Transcriptional regulator MraZ</fullName>
    </recommendedName>
</protein>
<feature type="chain" id="PRO_1000062941" description="Transcriptional regulator MraZ">
    <location>
        <begin position="1"/>
        <end position="152"/>
    </location>
</feature>
<feature type="domain" description="SpoVT-AbrB 1" evidence="2">
    <location>
        <begin position="5"/>
        <end position="52"/>
    </location>
</feature>
<feature type="domain" description="SpoVT-AbrB 2" evidence="2">
    <location>
        <begin position="81"/>
        <end position="124"/>
    </location>
</feature>
<proteinExistence type="inferred from homology"/>
<keyword id="KW-0963">Cytoplasm</keyword>
<keyword id="KW-0238">DNA-binding</keyword>
<keyword id="KW-0677">Repeat</keyword>
<keyword id="KW-0678">Repressor</keyword>
<keyword id="KW-0804">Transcription</keyword>
<keyword id="KW-0805">Transcription regulation</keyword>